<reference key="1">
    <citation type="submission" date="2006-06" db="EMBL/GenBank/DDBJ databases">
        <title>Complete sequence of Pseudoalteromonas atlantica T6c.</title>
        <authorList>
            <consortium name="US DOE Joint Genome Institute"/>
            <person name="Copeland A."/>
            <person name="Lucas S."/>
            <person name="Lapidus A."/>
            <person name="Barry K."/>
            <person name="Detter J.C."/>
            <person name="Glavina del Rio T."/>
            <person name="Hammon N."/>
            <person name="Israni S."/>
            <person name="Dalin E."/>
            <person name="Tice H."/>
            <person name="Pitluck S."/>
            <person name="Saunders E."/>
            <person name="Brettin T."/>
            <person name="Bruce D."/>
            <person name="Han C."/>
            <person name="Tapia R."/>
            <person name="Gilna P."/>
            <person name="Schmutz J."/>
            <person name="Larimer F."/>
            <person name="Land M."/>
            <person name="Hauser L."/>
            <person name="Kyrpides N."/>
            <person name="Kim E."/>
            <person name="Karls A.C."/>
            <person name="Bartlett D."/>
            <person name="Higgins B.P."/>
            <person name="Richardson P."/>
        </authorList>
    </citation>
    <scope>NUCLEOTIDE SEQUENCE [LARGE SCALE GENOMIC DNA]</scope>
    <source>
        <strain>T6c / ATCC BAA-1087</strain>
    </source>
</reference>
<keyword id="KW-0963">Cytoplasm</keyword>
<keyword id="KW-0269">Exonuclease</keyword>
<keyword id="KW-0378">Hydrolase</keyword>
<keyword id="KW-0540">Nuclease</keyword>
<protein>
    <recommendedName>
        <fullName evidence="1">Oligoribonuclease</fullName>
        <ecNumber evidence="1">3.1.15.-</ecNumber>
    </recommendedName>
</protein>
<organism>
    <name type="scientific">Pseudoalteromonas atlantica (strain T6c / ATCC BAA-1087)</name>
    <dbReference type="NCBI Taxonomy" id="3042615"/>
    <lineage>
        <taxon>Bacteria</taxon>
        <taxon>Pseudomonadati</taxon>
        <taxon>Pseudomonadota</taxon>
        <taxon>Gammaproteobacteria</taxon>
        <taxon>Alteromonadales</taxon>
        <taxon>Alteromonadaceae</taxon>
        <taxon>Paraglaciecola</taxon>
    </lineage>
</organism>
<accession>Q15Q55</accession>
<name>ORN_PSEA6</name>
<dbReference type="EC" id="3.1.15.-" evidence="1"/>
<dbReference type="EMBL" id="CP000388">
    <property type="protein sequence ID" value="ABG41983.1"/>
    <property type="molecule type" value="Genomic_DNA"/>
</dbReference>
<dbReference type="RefSeq" id="WP_011576211.1">
    <property type="nucleotide sequence ID" value="NC_008228.1"/>
</dbReference>
<dbReference type="SMR" id="Q15Q55"/>
<dbReference type="STRING" id="342610.Patl_3481"/>
<dbReference type="KEGG" id="pat:Patl_3481"/>
<dbReference type="eggNOG" id="COG1949">
    <property type="taxonomic scope" value="Bacteria"/>
</dbReference>
<dbReference type="HOGENOM" id="CLU_064761_2_0_6"/>
<dbReference type="OrthoDB" id="9801329at2"/>
<dbReference type="Proteomes" id="UP000001981">
    <property type="component" value="Chromosome"/>
</dbReference>
<dbReference type="GO" id="GO:0005737">
    <property type="term" value="C:cytoplasm"/>
    <property type="evidence" value="ECO:0007669"/>
    <property type="project" value="UniProtKB-SubCell"/>
</dbReference>
<dbReference type="GO" id="GO:0000175">
    <property type="term" value="F:3'-5'-RNA exonuclease activity"/>
    <property type="evidence" value="ECO:0007669"/>
    <property type="project" value="InterPro"/>
</dbReference>
<dbReference type="GO" id="GO:0003676">
    <property type="term" value="F:nucleic acid binding"/>
    <property type="evidence" value="ECO:0007669"/>
    <property type="project" value="InterPro"/>
</dbReference>
<dbReference type="GO" id="GO:0006259">
    <property type="term" value="P:DNA metabolic process"/>
    <property type="evidence" value="ECO:0007669"/>
    <property type="project" value="UniProtKB-ARBA"/>
</dbReference>
<dbReference type="CDD" id="cd06135">
    <property type="entry name" value="Orn"/>
    <property type="match status" value="1"/>
</dbReference>
<dbReference type="FunFam" id="3.30.420.10:FF:000003">
    <property type="entry name" value="Oligoribonuclease"/>
    <property type="match status" value="1"/>
</dbReference>
<dbReference type="Gene3D" id="3.30.420.10">
    <property type="entry name" value="Ribonuclease H-like superfamily/Ribonuclease H"/>
    <property type="match status" value="1"/>
</dbReference>
<dbReference type="HAMAP" id="MF_00045">
    <property type="entry name" value="Oligoribonuclease"/>
    <property type="match status" value="1"/>
</dbReference>
<dbReference type="InterPro" id="IPR013520">
    <property type="entry name" value="Exonuclease_RNaseT/DNA_pol3"/>
</dbReference>
<dbReference type="InterPro" id="IPR022894">
    <property type="entry name" value="Oligoribonuclease"/>
</dbReference>
<dbReference type="InterPro" id="IPR012337">
    <property type="entry name" value="RNaseH-like_sf"/>
</dbReference>
<dbReference type="InterPro" id="IPR036397">
    <property type="entry name" value="RNaseH_sf"/>
</dbReference>
<dbReference type="NCBIfam" id="NF003765">
    <property type="entry name" value="PRK05359.1"/>
    <property type="match status" value="1"/>
</dbReference>
<dbReference type="PANTHER" id="PTHR11046">
    <property type="entry name" value="OLIGORIBONUCLEASE, MITOCHONDRIAL"/>
    <property type="match status" value="1"/>
</dbReference>
<dbReference type="PANTHER" id="PTHR11046:SF0">
    <property type="entry name" value="OLIGORIBONUCLEASE, MITOCHONDRIAL"/>
    <property type="match status" value="1"/>
</dbReference>
<dbReference type="Pfam" id="PF00929">
    <property type="entry name" value="RNase_T"/>
    <property type="match status" value="1"/>
</dbReference>
<dbReference type="SMART" id="SM00479">
    <property type="entry name" value="EXOIII"/>
    <property type="match status" value="1"/>
</dbReference>
<dbReference type="SUPFAM" id="SSF53098">
    <property type="entry name" value="Ribonuclease H-like"/>
    <property type="match status" value="1"/>
</dbReference>
<feature type="chain" id="PRO_1000004270" description="Oligoribonuclease">
    <location>
        <begin position="1"/>
        <end position="181"/>
    </location>
</feature>
<feature type="domain" description="Exonuclease" evidence="1">
    <location>
        <begin position="8"/>
        <end position="171"/>
    </location>
</feature>
<feature type="active site" evidence="1">
    <location>
        <position position="129"/>
    </location>
</feature>
<evidence type="ECO:0000255" key="1">
    <source>
        <dbReference type="HAMAP-Rule" id="MF_00045"/>
    </source>
</evidence>
<proteinExistence type="inferred from homology"/>
<comment type="function">
    <text evidence="1">3'-to-5' exoribonuclease specific for small oligoribonucleotides.</text>
</comment>
<comment type="subcellular location">
    <subcellularLocation>
        <location evidence="1">Cytoplasm</location>
    </subcellularLocation>
</comment>
<comment type="similarity">
    <text evidence="1">Belongs to the oligoribonuclease family.</text>
</comment>
<sequence>MAVDAQNLVWIDMEMTGLHPEVDVVLEIATIVTDANLNILAEGPVLAIHQSDDVLNNMNQWCIDTHGKSGLTERSRKSTVDEQTAVAETIRFLEKYVPKGASPLCGNTIGQDRRFMVKYMPELEDYFHYRNIDVSTLKELVKRWKPEVLEGFSKKGVHLALDDIRESIAELVFYRQHIFNI</sequence>
<gene>
    <name evidence="1" type="primary">orn</name>
    <name type="ordered locus">Patl_3481</name>
</gene>